<proteinExistence type="inferred from homology"/>
<dbReference type="EC" id="3.6.1.-" evidence="1"/>
<dbReference type="EMBL" id="CP000026">
    <property type="protein sequence ID" value="AAV78714.1"/>
    <property type="molecule type" value="Genomic_DNA"/>
</dbReference>
<dbReference type="RefSeq" id="WP_000564481.1">
    <property type="nucleotide sequence ID" value="NC_006511.1"/>
</dbReference>
<dbReference type="SMR" id="Q5PEN3"/>
<dbReference type="KEGG" id="spt:SPA2869"/>
<dbReference type="HOGENOM" id="CLU_087195_3_2_6"/>
<dbReference type="Proteomes" id="UP000008185">
    <property type="component" value="Chromosome"/>
</dbReference>
<dbReference type="GO" id="GO:0005737">
    <property type="term" value="C:cytoplasm"/>
    <property type="evidence" value="ECO:0007669"/>
    <property type="project" value="TreeGrafter"/>
</dbReference>
<dbReference type="GO" id="GO:0034353">
    <property type="term" value="F:mRNA 5'-diphosphatase activity"/>
    <property type="evidence" value="ECO:0007669"/>
    <property type="project" value="TreeGrafter"/>
</dbReference>
<dbReference type="GO" id="GO:0006402">
    <property type="term" value="P:mRNA catabolic process"/>
    <property type="evidence" value="ECO:0007669"/>
    <property type="project" value="TreeGrafter"/>
</dbReference>
<dbReference type="CDD" id="cd03671">
    <property type="entry name" value="NUDIX_Ap4A_hydrolase_plant_like"/>
    <property type="match status" value="1"/>
</dbReference>
<dbReference type="FunFam" id="3.90.79.10:FF:000001">
    <property type="entry name" value="RNA pyrophosphohydrolase"/>
    <property type="match status" value="1"/>
</dbReference>
<dbReference type="Gene3D" id="3.90.79.10">
    <property type="entry name" value="Nucleoside Triphosphate Pyrophosphohydrolase"/>
    <property type="match status" value="1"/>
</dbReference>
<dbReference type="HAMAP" id="MF_00298">
    <property type="entry name" value="Nudix_RppH"/>
    <property type="match status" value="1"/>
</dbReference>
<dbReference type="InterPro" id="IPR020476">
    <property type="entry name" value="Nudix_hydrolase"/>
</dbReference>
<dbReference type="InterPro" id="IPR015797">
    <property type="entry name" value="NUDIX_hydrolase-like_dom_sf"/>
</dbReference>
<dbReference type="InterPro" id="IPR020084">
    <property type="entry name" value="NUDIX_hydrolase_CS"/>
</dbReference>
<dbReference type="InterPro" id="IPR000086">
    <property type="entry name" value="NUDIX_hydrolase_dom"/>
</dbReference>
<dbReference type="InterPro" id="IPR022927">
    <property type="entry name" value="RppH"/>
</dbReference>
<dbReference type="NCBIfam" id="NF001934">
    <property type="entry name" value="PRK00714.1-1"/>
    <property type="match status" value="1"/>
</dbReference>
<dbReference type="NCBIfam" id="NF001937">
    <property type="entry name" value="PRK00714.1-4"/>
    <property type="match status" value="1"/>
</dbReference>
<dbReference type="NCBIfam" id="NF001938">
    <property type="entry name" value="PRK00714.1-5"/>
    <property type="match status" value="1"/>
</dbReference>
<dbReference type="PANTHER" id="PTHR23114">
    <property type="entry name" value="M7GPPPN-MRNA HYDROLASE"/>
    <property type="match status" value="1"/>
</dbReference>
<dbReference type="PANTHER" id="PTHR23114:SF17">
    <property type="entry name" value="M7GPPPN-MRNA HYDROLASE"/>
    <property type="match status" value="1"/>
</dbReference>
<dbReference type="Pfam" id="PF00293">
    <property type="entry name" value="NUDIX"/>
    <property type="match status" value="1"/>
</dbReference>
<dbReference type="PRINTS" id="PR00502">
    <property type="entry name" value="NUDIXFAMILY"/>
</dbReference>
<dbReference type="SUPFAM" id="SSF55811">
    <property type="entry name" value="Nudix"/>
    <property type="match status" value="1"/>
</dbReference>
<dbReference type="PROSITE" id="PS51462">
    <property type="entry name" value="NUDIX"/>
    <property type="match status" value="1"/>
</dbReference>
<dbReference type="PROSITE" id="PS00893">
    <property type="entry name" value="NUDIX_BOX"/>
    <property type="match status" value="1"/>
</dbReference>
<accession>Q5PEN3</accession>
<feature type="chain" id="PRO_0000231935" description="RNA pyrophosphohydrolase">
    <location>
        <begin position="1"/>
        <end position="176"/>
    </location>
</feature>
<feature type="domain" description="Nudix hydrolase" evidence="1">
    <location>
        <begin position="6"/>
        <end position="149"/>
    </location>
</feature>
<feature type="short sequence motif" description="Nudix box">
    <location>
        <begin position="38"/>
        <end position="59"/>
    </location>
</feature>
<name>RPPH_SALPA</name>
<gene>
    <name evidence="1" type="primary">rppH</name>
    <name evidence="1" type="synonym">nudH</name>
    <name type="ordered locus">SPA2869</name>
</gene>
<reference key="1">
    <citation type="journal article" date="2004" name="Nat. Genet.">
        <title>Comparison of genome degradation in Paratyphi A and Typhi, human-restricted serovars of Salmonella enterica that cause typhoid.</title>
        <authorList>
            <person name="McClelland M."/>
            <person name="Sanderson K.E."/>
            <person name="Clifton S.W."/>
            <person name="Latreille P."/>
            <person name="Porwollik S."/>
            <person name="Sabo A."/>
            <person name="Meyer R."/>
            <person name="Bieri T."/>
            <person name="Ozersky P."/>
            <person name="McLellan M."/>
            <person name="Harkins C.R."/>
            <person name="Wang C."/>
            <person name="Nguyen C."/>
            <person name="Berghoff A."/>
            <person name="Elliott G."/>
            <person name="Kohlberg S."/>
            <person name="Strong C."/>
            <person name="Du F."/>
            <person name="Carter J."/>
            <person name="Kremizki C."/>
            <person name="Layman D."/>
            <person name="Leonard S."/>
            <person name="Sun H."/>
            <person name="Fulton L."/>
            <person name="Nash W."/>
            <person name="Miner T."/>
            <person name="Minx P."/>
            <person name="Delehaunty K."/>
            <person name="Fronick C."/>
            <person name="Magrini V."/>
            <person name="Nhan M."/>
            <person name="Warren W."/>
            <person name="Florea L."/>
            <person name="Spieth J."/>
            <person name="Wilson R.K."/>
        </authorList>
    </citation>
    <scope>NUCLEOTIDE SEQUENCE [LARGE SCALE GENOMIC DNA]</scope>
    <source>
        <strain>ATCC 9150 / SARB42</strain>
    </source>
</reference>
<evidence type="ECO:0000255" key="1">
    <source>
        <dbReference type="HAMAP-Rule" id="MF_00298"/>
    </source>
</evidence>
<organism>
    <name type="scientific">Salmonella paratyphi A (strain ATCC 9150 / SARB42)</name>
    <dbReference type="NCBI Taxonomy" id="295319"/>
    <lineage>
        <taxon>Bacteria</taxon>
        <taxon>Pseudomonadati</taxon>
        <taxon>Pseudomonadota</taxon>
        <taxon>Gammaproteobacteria</taxon>
        <taxon>Enterobacterales</taxon>
        <taxon>Enterobacteriaceae</taxon>
        <taxon>Salmonella</taxon>
    </lineage>
</organism>
<comment type="function">
    <text evidence="1">Accelerates the degradation of transcripts by removing pyrophosphate from the 5'-end of triphosphorylated RNA, leading to a more labile monophosphorylated state that can stimulate subsequent ribonuclease cleavage.</text>
</comment>
<comment type="cofactor">
    <cofactor evidence="1">
        <name>a divalent metal cation</name>
        <dbReference type="ChEBI" id="CHEBI:60240"/>
    </cofactor>
</comment>
<comment type="similarity">
    <text evidence="1">Belongs to the Nudix hydrolase family. RppH subfamily.</text>
</comment>
<sequence length="176" mass="20806">MIDDDGYRPNVGIVICNRQGQVMWARRFGQHSWQFPQGGINPGESAEQAMYRELFEEVGLSRKDVRILASTRNWLRYKLPKRLVRWDTKPVCIGQKQKWFLLQLMSADAEINMQTSSTPEFDGWRWVSYWYPVRQVVSFKRDVYRRVMKEFASVVMALQDNPPKLQSAPAYRRKRG</sequence>
<protein>
    <recommendedName>
        <fullName evidence="1">RNA pyrophosphohydrolase</fullName>
        <ecNumber evidence="1">3.6.1.-</ecNumber>
    </recommendedName>
    <alternativeName>
        <fullName evidence="1">(Di)nucleoside polyphosphate hydrolase</fullName>
    </alternativeName>
</protein>
<keyword id="KW-0378">Hydrolase</keyword>